<sequence length="113" mass="12564">MQAKAVVRTVRIAPRKVRLVVDLIRGKQVGEAIAILNHTPKTASPVVEKVLKSAIANAEHNYEMDINNLVVEKVFVDEGPTLKRFRPRAMGRASQINKRTSHITVVVSEKKEG</sequence>
<accession>A9VP82</accession>
<gene>
    <name evidence="1" type="primary">rplV</name>
    <name type="ordered locus">BcerKBAB4_0110</name>
</gene>
<dbReference type="EMBL" id="CP000903">
    <property type="protein sequence ID" value="ABY41379.1"/>
    <property type="molecule type" value="Genomic_DNA"/>
</dbReference>
<dbReference type="RefSeq" id="WP_002009773.1">
    <property type="nucleotide sequence ID" value="NZ_CAKMRX030000129.1"/>
</dbReference>
<dbReference type="SMR" id="A9VP82"/>
<dbReference type="GeneID" id="66264816"/>
<dbReference type="KEGG" id="bwe:BcerKBAB4_0110"/>
<dbReference type="eggNOG" id="COG0091">
    <property type="taxonomic scope" value="Bacteria"/>
</dbReference>
<dbReference type="HOGENOM" id="CLU_083987_3_3_9"/>
<dbReference type="Proteomes" id="UP000002154">
    <property type="component" value="Chromosome"/>
</dbReference>
<dbReference type="GO" id="GO:0022625">
    <property type="term" value="C:cytosolic large ribosomal subunit"/>
    <property type="evidence" value="ECO:0007669"/>
    <property type="project" value="TreeGrafter"/>
</dbReference>
<dbReference type="GO" id="GO:0019843">
    <property type="term" value="F:rRNA binding"/>
    <property type="evidence" value="ECO:0007669"/>
    <property type="project" value="UniProtKB-UniRule"/>
</dbReference>
<dbReference type="GO" id="GO:0003735">
    <property type="term" value="F:structural constituent of ribosome"/>
    <property type="evidence" value="ECO:0007669"/>
    <property type="project" value="InterPro"/>
</dbReference>
<dbReference type="GO" id="GO:0006412">
    <property type="term" value="P:translation"/>
    <property type="evidence" value="ECO:0007669"/>
    <property type="project" value="UniProtKB-UniRule"/>
</dbReference>
<dbReference type="CDD" id="cd00336">
    <property type="entry name" value="Ribosomal_L22"/>
    <property type="match status" value="1"/>
</dbReference>
<dbReference type="FunFam" id="3.90.470.10:FF:000001">
    <property type="entry name" value="50S ribosomal protein L22"/>
    <property type="match status" value="1"/>
</dbReference>
<dbReference type="Gene3D" id="3.90.470.10">
    <property type="entry name" value="Ribosomal protein L22/L17"/>
    <property type="match status" value="1"/>
</dbReference>
<dbReference type="HAMAP" id="MF_01331_B">
    <property type="entry name" value="Ribosomal_uL22_B"/>
    <property type="match status" value="1"/>
</dbReference>
<dbReference type="InterPro" id="IPR001063">
    <property type="entry name" value="Ribosomal_uL22"/>
</dbReference>
<dbReference type="InterPro" id="IPR005727">
    <property type="entry name" value="Ribosomal_uL22_bac/chlpt-type"/>
</dbReference>
<dbReference type="InterPro" id="IPR047867">
    <property type="entry name" value="Ribosomal_uL22_bac/org-type"/>
</dbReference>
<dbReference type="InterPro" id="IPR018260">
    <property type="entry name" value="Ribosomal_uL22_CS"/>
</dbReference>
<dbReference type="InterPro" id="IPR036394">
    <property type="entry name" value="Ribosomal_uL22_sf"/>
</dbReference>
<dbReference type="NCBIfam" id="TIGR01044">
    <property type="entry name" value="rplV_bact"/>
    <property type="match status" value="1"/>
</dbReference>
<dbReference type="PANTHER" id="PTHR13501">
    <property type="entry name" value="CHLOROPLAST 50S RIBOSOMAL PROTEIN L22-RELATED"/>
    <property type="match status" value="1"/>
</dbReference>
<dbReference type="PANTHER" id="PTHR13501:SF8">
    <property type="entry name" value="LARGE RIBOSOMAL SUBUNIT PROTEIN UL22M"/>
    <property type="match status" value="1"/>
</dbReference>
<dbReference type="Pfam" id="PF00237">
    <property type="entry name" value="Ribosomal_L22"/>
    <property type="match status" value="1"/>
</dbReference>
<dbReference type="SUPFAM" id="SSF54843">
    <property type="entry name" value="Ribosomal protein L22"/>
    <property type="match status" value="1"/>
</dbReference>
<dbReference type="PROSITE" id="PS00464">
    <property type="entry name" value="RIBOSOMAL_L22"/>
    <property type="match status" value="1"/>
</dbReference>
<feature type="chain" id="PRO_1000142231" description="Large ribosomal subunit protein uL22">
    <location>
        <begin position="1"/>
        <end position="113"/>
    </location>
</feature>
<proteinExistence type="inferred from homology"/>
<keyword id="KW-0687">Ribonucleoprotein</keyword>
<keyword id="KW-0689">Ribosomal protein</keyword>
<keyword id="KW-0694">RNA-binding</keyword>
<keyword id="KW-0699">rRNA-binding</keyword>
<protein>
    <recommendedName>
        <fullName evidence="1">Large ribosomal subunit protein uL22</fullName>
    </recommendedName>
    <alternativeName>
        <fullName evidence="2">50S ribosomal protein L22</fullName>
    </alternativeName>
</protein>
<reference key="1">
    <citation type="journal article" date="2008" name="Chem. Biol. Interact.">
        <title>Extending the Bacillus cereus group genomics to putative food-borne pathogens of different toxicity.</title>
        <authorList>
            <person name="Lapidus A."/>
            <person name="Goltsman E."/>
            <person name="Auger S."/>
            <person name="Galleron N."/>
            <person name="Segurens B."/>
            <person name="Dossat C."/>
            <person name="Land M.L."/>
            <person name="Broussolle V."/>
            <person name="Brillard J."/>
            <person name="Guinebretiere M.-H."/>
            <person name="Sanchis V."/>
            <person name="Nguen-the C."/>
            <person name="Lereclus D."/>
            <person name="Richardson P."/>
            <person name="Wincker P."/>
            <person name="Weissenbach J."/>
            <person name="Ehrlich S.D."/>
            <person name="Sorokin A."/>
        </authorList>
    </citation>
    <scope>NUCLEOTIDE SEQUENCE [LARGE SCALE GENOMIC DNA]</scope>
    <source>
        <strain>KBAB4</strain>
    </source>
</reference>
<comment type="function">
    <text evidence="1">This protein binds specifically to 23S rRNA; its binding is stimulated by other ribosomal proteins, e.g. L4, L17, and L20. It is important during the early stages of 50S assembly. It makes multiple contacts with different domains of the 23S rRNA in the assembled 50S subunit and ribosome (By similarity).</text>
</comment>
<comment type="function">
    <text evidence="1">The globular domain of the protein is located near the polypeptide exit tunnel on the outside of the subunit, while an extended beta-hairpin is found that lines the wall of the exit tunnel in the center of the 70S ribosome.</text>
</comment>
<comment type="subunit">
    <text evidence="1">Part of the 50S ribosomal subunit.</text>
</comment>
<comment type="similarity">
    <text evidence="1">Belongs to the universal ribosomal protein uL22 family.</text>
</comment>
<organism>
    <name type="scientific">Bacillus mycoides (strain KBAB4)</name>
    <name type="common">Bacillus weihenstephanensis</name>
    <dbReference type="NCBI Taxonomy" id="315730"/>
    <lineage>
        <taxon>Bacteria</taxon>
        <taxon>Bacillati</taxon>
        <taxon>Bacillota</taxon>
        <taxon>Bacilli</taxon>
        <taxon>Bacillales</taxon>
        <taxon>Bacillaceae</taxon>
        <taxon>Bacillus</taxon>
        <taxon>Bacillus cereus group</taxon>
    </lineage>
</organism>
<evidence type="ECO:0000255" key="1">
    <source>
        <dbReference type="HAMAP-Rule" id="MF_01331"/>
    </source>
</evidence>
<evidence type="ECO:0000305" key="2"/>
<name>RL22_BACMK</name>